<protein>
    <recommendedName>
        <fullName evidence="1">tRNA (guanine-N(1)-)-methyltransferase</fullName>
        <ecNumber evidence="1">2.1.1.228</ecNumber>
    </recommendedName>
    <alternativeName>
        <fullName evidence="1">M1G-methyltransferase</fullName>
    </alternativeName>
    <alternativeName>
        <fullName evidence="1">tRNA [GM37] methyltransferase</fullName>
    </alternativeName>
</protein>
<keyword id="KW-0963">Cytoplasm</keyword>
<keyword id="KW-0489">Methyltransferase</keyword>
<keyword id="KW-1185">Reference proteome</keyword>
<keyword id="KW-0949">S-adenosyl-L-methionine</keyword>
<keyword id="KW-0808">Transferase</keyword>
<keyword id="KW-0819">tRNA processing</keyword>
<gene>
    <name evidence="1" type="primary">trmD</name>
    <name type="ordered locus">VF_0551</name>
</gene>
<evidence type="ECO:0000255" key="1">
    <source>
        <dbReference type="HAMAP-Rule" id="MF_00605"/>
    </source>
</evidence>
<comment type="function">
    <text evidence="1">Specifically methylates guanosine-37 in various tRNAs.</text>
</comment>
<comment type="catalytic activity">
    <reaction evidence="1">
        <text>guanosine(37) in tRNA + S-adenosyl-L-methionine = N(1)-methylguanosine(37) in tRNA + S-adenosyl-L-homocysteine + H(+)</text>
        <dbReference type="Rhea" id="RHEA:36899"/>
        <dbReference type="Rhea" id="RHEA-COMP:10145"/>
        <dbReference type="Rhea" id="RHEA-COMP:10147"/>
        <dbReference type="ChEBI" id="CHEBI:15378"/>
        <dbReference type="ChEBI" id="CHEBI:57856"/>
        <dbReference type="ChEBI" id="CHEBI:59789"/>
        <dbReference type="ChEBI" id="CHEBI:73542"/>
        <dbReference type="ChEBI" id="CHEBI:74269"/>
        <dbReference type="EC" id="2.1.1.228"/>
    </reaction>
</comment>
<comment type="subunit">
    <text evidence="1">Homodimer.</text>
</comment>
<comment type="subcellular location">
    <subcellularLocation>
        <location evidence="1">Cytoplasm</location>
    </subcellularLocation>
</comment>
<comment type="similarity">
    <text evidence="1">Belongs to the RNA methyltransferase TrmD family.</text>
</comment>
<organism>
    <name type="scientific">Aliivibrio fischeri (strain ATCC 700601 / ES114)</name>
    <name type="common">Vibrio fischeri</name>
    <dbReference type="NCBI Taxonomy" id="312309"/>
    <lineage>
        <taxon>Bacteria</taxon>
        <taxon>Pseudomonadati</taxon>
        <taxon>Pseudomonadota</taxon>
        <taxon>Gammaproteobacteria</taxon>
        <taxon>Vibrionales</taxon>
        <taxon>Vibrionaceae</taxon>
        <taxon>Aliivibrio</taxon>
    </lineage>
</organism>
<name>TRMD_ALIF1</name>
<sequence>MWVGVISLFPEMFRSVTDFGVTSQAIKKGLLSIETWNPRDFTHDKHRTVDDRPYGGGPGMLMMVQPLRDAITAAREASPGKTKVIYLSPQGRTLNQAGVEELATNENLILICGRYEGVDERIIQSEVDEEWSIGDFVLTGGELPAMTLIDSVSRFVPGVLGDFASAEEDSFADGLLDCPHYTRPEVLDGKEVPSVLKSGNHKDIARWRMKQSLGRTWLRRPELLGNLALTDEQELLLAEFVREERQNSK</sequence>
<feature type="chain" id="PRO_0000060493" description="tRNA (guanine-N(1)-)-methyltransferase">
    <location>
        <begin position="1"/>
        <end position="249"/>
    </location>
</feature>
<feature type="binding site" evidence="1">
    <location>
        <position position="113"/>
    </location>
    <ligand>
        <name>S-adenosyl-L-methionine</name>
        <dbReference type="ChEBI" id="CHEBI:59789"/>
    </ligand>
</feature>
<feature type="binding site" evidence="1">
    <location>
        <begin position="133"/>
        <end position="138"/>
    </location>
    <ligand>
        <name>S-adenosyl-L-methionine</name>
        <dbReference type="ChEBI" id="CHEBI:59789"/>
    </ligand>
</feature>
<accession>Q5E7F0</accession>
<reference key="1">
    <citation type="journal article" date="2005" name="Proc. Natl. Acad. Sci. U.S.A.">
        <title>Complete genome sequence of Vibrio fischeri: a symbiotic bacterium with pathogenic congeners.</title>
        <authorList>
            <person name="Ruby E.G."/>
            <person name="Urbanowski M."/>
            <person name="Campbell J."/>
            <person name="Dunn A."/>
            <person name="Faini M."/>
            <person name="Gunsalus R."/>
            <person name="Lostroh P."/>
            <person name="Lupp C."/>
            <person name="McCann J."/>
            <person name="Millikan D."/>
            <person name="Schaefer A."/>
            <person name="Stabb E."/>
            <person name="Stevens A."/>
            <person name="Visick K."/>
            <person name="Whistler C."/>
            <person name="Greenberg E.P."/>
        </authorList>
    </citation>
    <scope>NUCLEOTIDE SEQUENCE [LARGE SCALE GENOMIC DNA]</scope>
    <source>
        <strain>ATCC 700601 / ES114</strain>
    </source>
</reference>
<proteinExistence type="inferred from homology"/>
<dbReference type="EC" id="2.1.1.228" evidence="1"/>
<dbReference type="EMBL" id="CP000020">
    <property type="protein sequence ID" value="AAW85046.1"/>
    <property type="molecule type" value="Genomic_DNA"/>
</dbReference>
<dbReference type="RefSeq" id="WP_005417802.1">
    <property type="nucleotide sequence ID" value="NZ_CAWLES010000001.1"/>
</dbReference>
<dbReference type="RefSeq" id="YP_203934.1">
    <property type="nucleotide sequence ID" value="NC_006840.2"/>
</dbReference>
<dbReference type="SMR" id="Q5E7F0"/>
<dbReference type="STRING" id="312309.VF_0551"/>
<dbReference type="EnsemblBacteria" id="AAW85046">
    <property type="protein sequence ID" value="AAW85046"/>
    <property type="gene ID" value="VF_0551"/>
</dbReference>
<dbReference type="GeneID" id="54163200"/>
<dbReference type="KEGG" id="vfi:VF_0551"/>
<dbReference type="PATRIC" id="fig|312309.11.peg.544"/>
<dbReference type="eggNOG" id="COG0336">
    <property type="taxonomic scope" value="Bacteria"/>
</dbReference>
<dbReference type="HOGENOM" id="CLU_047363_0_1_6"/>
<dbReference type="OrthoDB" id="9807416at2"/>
<dbReference type="Proteomes" id="UP000000537">
    <property type="component" value="Chromosome I"/>
</dbReference>
<dbReference type="GO" id="GO:0005829">
    <property type="term" value="C:cytosol"/>
    <property type="evidence" value="ECO:0007669"/>
    <property type="project" value="TreeGrafter"/>
</dbReference>
<dbReference type="GO" id="GO:0052906">
    <property type="term" value="F:tRNA (guanine(37)-N1)-methyltransferase activity"/>
    <property type="evidence" value="ECO:0007669"/>
    <property type="project" value="UniProtKB-UniRule"/>
</dbReference>
<dbReference type="GO" id="GO:0002939">
    <property type="term" value="P:tRNA N1-guanine methylation"/>
    <property type="evidence" value="ECO:0007669"/>
    <property type="project" value="TreeGrafter"/>
</dbReference>
<dbReference type="CDD" id="cd18080">
    <property type="entry name" value="TrmD-like"/>
    <property type="match status" value="1"/>
</dbReference>
<dbReference type="FunFam" id="1.10.1270.20:FF:000001">
    <property type="entry name" value="tRNA (guanine-N(1)-)-methyltransferase"/>
    <property type="match status" value="1"/>
</dbReference>
<dbReference type="FunFam" id="3.40.1280.10:FF:000001">
    <property type="entry name" value="tRNA (guanine-N(1)-)-methyltransferase"/>
    <property type="match status" value="1"/>
</dbReference>
<dbReference type="Gene3D" id="3.40.1280.10">
    <property type="match status" value="1"/>
</dbReference>
<dbReference type="Gene3D" id="1.10.1270.20">
    <property type="entry name" value="tRNA(m1g37)methyltransferase, domain 2"/>
    <property type="match status" value="1"/>
</dbReference>
<dbReference type="HAMAP" id="MF_00605">
    <property type="entry name" value="TrmD"/>
    <property type="match status" value="1"/>
</dbReference>
<dbReference type="InterPro" id="IPR029028">
    <property type="entry name" value="Alpha/beta_knot_MTases"/>
</dbReference>
<dbReference type="InterPro" id="IPR023148">
    <property type="entry name" value="tRNA_m1G_MeTrfase_C_sf"/>
</dbReference>
<dbReference type="InterPro" id="IPR002649">
    <property type="entry name" value="tRNA_m1G_MeTrfase_TrmD"/>
</dbReference>
<dbReference type="InterPro" id="IPR029026">
    <property type="entry name" value="tRNA_m1G_MTases_N"/>
</dbReference>
<dbReference type="InterPro" id="IPR016009">
    <property type="entry name" value="tRNA_MeTrfase_TRMD/TRM10"/>
</dbReference>
<dbReference type="NCBIfam" id="NF000648">
    <property type="entry name" value="PRK00026.1"/>
    <property type="match status" value="1"/>
</dbReference>
<dbReference type="NCBIfam" id="TIGR00088">
    <property type="entry name" value="trmD"/>
    <property type="match status" value="1"/>
</dbReference>
<dbReference type="PANTHER" id="PTHR46417">
    <property type="entry name" value="TRNA (GUANINE-N(1)-)-METHYLTRANSFERASE"/>
    <property type="match status" value="1"/>
</dbReference>
<dbReference type="PANTHER" id="PTHR46417:SF1">
    <property type="entry name" value="TRNA (GUANINE-N(1)-)-METHYLTRANSFERASE"/>
    <property type="match status" value="1"/>
</dbReference>
<dbReference type="Pfam" id="PF01746">
    <property type="entry name" value="tRNA_m1G_MT"/>
    <property type="match status" value="1"/>
</dbReference>
<dbReference type="PIRSF" id="PIRSF000386">
    <property type="entry name" value="tRNA_mtase"/>
    <property type="match status" value="1"/>
</dbReference>
<dbReference type="SUPFAM" id="SSF75217">
    <property type="entry name" value="alpha/beta knot"/>
    <property type="match status" value="1"/>
</dbReference>